<gene>
    <name evidence="1" type="primary">recU</name>
    <name type="ordered locus">LBA1158</name>
</gene>
<organism>
    <name type="scientific">Lactobacillus acidophilus (strain ATCC 700396 / NCK56 / N2 / NCFM)</name>
    <dbReference type="NCBI Taxonomy" id="272621"/>
    <lineage>
        <taxon>Bacteria</taxon>
        <taxon>Bacillati</taxon>
        <taxon>Bacillota</taxon>
        <taxon>Bacilli</taxon>
        <taxon>Lactobacillales</taxon>
        <taxon>Lactobacillaceae</taxon>
        <taxon>Lactobacillus</taxon>
    </lineage>
</organism>
<keyword id="KW-0963">Cytoplasm</keyword>
<keyword id="KW-0227">DNA damage</keyword>
<keyword id="KW-0233">DNA recombination</keyword>
<keyword id="KW-0234">DNA repair</keyword>
<keyword id="KW-0255">Endonuclease</keyword>
<keyword id="KW-0378">Hydrolase</keyword>
<keyword id="KW-0460">Magnesium</keyword>
<keyword id="KW-0479">Metal-binding</keyword>
<keyword id="KW-0540">Nuclease</keyword>
<keyword id="KW-1185">Reference proteome</keyword>
<reference key="1">
    <citation type="journal article" date="2005" name="Proc. Natl. Acad. Sci. U.S.A.">
        <title>Complete genome sequence of the probiotic lactic acid bacterium Lactobacillus acidophilus NCFM.</title>
        <authorList>
            <person name="Altermann E."/>
            <person name="Russell W.M."/>
            <person name="Azcarate-Peril M.A."/>
            <person name="Barrangou R."/>
            <person name="Buck B.L."/>
            <person name="McAuliffe O."/>
            <person name="Souther N."/>
            <person name="Dobson A."/>
            <person name="Duong T."/>
            <person name="Callanan M."/>
            <person name="Lick S."/>
            <person name="Hamrick A."/>
            <person name="Cano R."/>
            <person name="Klaenhammer T.R."/>
        </authorList>
    </citation>
    <scope>NUCLEOTIDE SEQUENCE [LARGE SCALE GENOMIC DNA]</scope>
    <source>
        <strain>ATCC 700396 / NCK56 / N2 / NCFM</strain>
    </source>
</reference>
<proteinExistence type="inferred from homology"/>
<dbReference type="EC" id="3.1.21.10" evidence="1"/>
<dbReference type="EMBL" id="CP000033">
    <property type="protein sequence ID" value="AAV42997.1"/>
    <property type="molecule type" value="Genomic_DNA"/>
</dbReference>
<dbReference type="RefSeq" id="WP_011254360.1">
    <property type="nucleotide sequence ID" value="NC_006814.3"/>
</dbReference>
<dbReference type="RefSeq" id="YP_194028.1">
    <property type="nucleotide sequence ID" value="NC_006814.3"/>
</dbReference>
<dbReference type="SMR" id="Q5FJX7"/>
<dbReference type="STRING" id="272621.LBA1158"/>
<dbReference type="GeneID" id="93289741"/>
<dbReference type="KEGG" id="lac:LBA1158"/>
<dbReference type="PATRIC" id="fig|272621.13.peg.1100"/>
<dbReference type="eggNOG" id="COG3331">
    <property type="taxonomic scope" value="Bacteria"/>
</dbReference>
<dbReference type="HOGENOM" id="CLU_096340_0_0_9"/>
<dbReference type="OrthoDB" id="9783592at2"/>
<dbReference type="BioCyc" id="LACI272621:G1G49-1148-MONOMER"/>
<dbReference type="Proteomes" id="UP000006381">
    <property type="component" value="Chromosome"/>
</dbReference>
<dbReference type="GO" id="GO:0005737">
    <property type="term" value="C:cytoplasm"/>
    <property type="evidence" value="ECO:0007669"/>
    <property type="project" value="UniProtKB-SubCell"/>
</dbReference>
<dbReference type="GO" id="GO:0004519">
    <property type="term" value="F:endonuclease activity"/>
    <property type="evidence" value="ECO:0007669"/>
    <property type="project" value="UniProtKB-UniRule"/>
</dbReference>
<dbReference type="GO" id="GO:0000287">
    <property type="term" value="F:magnesium ion binding"/>
    <property type="evidence" value="ECO:0007669"/>
    <property type="project" value="UniProtKB-UniRule"/>
</dbReference>
<dbReference type="GO" id="GO:0003676">
    <property type="term" value="F:nucleic acid binding"/>
    <property type="evidence" value="ECO:0007669"/>
    <property type="project" value="InterPro"/>
</dbReference>
<dbReference type="GO" id="GO:0007059">
    <property type="term" value="P:chromosome segregation"/>
    <property type="evidence" value="ECO:0007669"/>
    <property type="project" value="UniProtKB-UniRule"/>
</dbReference>
<dbReference type="GO" id="GO:0006310">
    <property type="term" value="P:DNA recombination"/>
    <property type="evidence" value="ECO:0007669"/>
    <property type="project" value="UniProtKB-UniRule"/>
</dbReference>
<dbReference type="GO" id="GO:0006281">
    <property type="term" value="P:DNA repair"/>
    <property type="evidence" value="ECO:0007669"/>
    <property type="project" value="UniProtKB-UniRule"/>
</dbReference>
<dbReference type="CDD" id="cd22354">
    <property type="entry name" value="RecU-like"/>
    <property type="match status" value="1"/>
</dbReference>
<dbReference type="Gene3D" id="3.40.1350.10">
    <property type="match status" value="1"/>
</dbReference>
<dbReference type="HAMAP" id="MF_00130">
    <property type="entry name" value="RecU"/>
    <property type="match status" value="1"/>
</dbReference>
<dbReference type="InterPro" id="IPR004612">
    <property type="entry name" value="Resolv_RecU"/>
</dbReference>
<dbReference type="InterPro" id="IPR011335">
    <property type="entry name" value="Restrct_endonuc-II-like"/>
</dbReference>
<dbReference type="InterPro" id="IPR011856">
    <property type="entry name" value="tRNA_endonuc-like_dom_sf"/>
</dbReference>
<dbReference type="NCBIfam" id="NF002584">
    <property type="entry name" value="PRK02234.1-5"/>
    <property type="match status" value="1"/>
</dbReference>
<dbReference type="NCBIfam" id="TIGR00648">
    <property type="entry name" value="recU"/>
    <property type="match status" value="1"/>
</dbReference>
<dbReference type="Pfam" id="PF03838">
    <property type="entry name" value="RecU"/>
    <property type="match status" value="1"/>
</dbReference>
<dbReference type="PIRSF" id="PIRSF037785">
    <property type="entry name" value="RecU"/>
    <property type="match status" value="1"/>
</dbReference>
<dbReference type="SUPFAM" id="SSF52980">
    <property type="entry name" value="Restriction endonuclease-like"/>
    <property type="match status" value="1"/>
</dbReference>
<comment type="function">
    <text evidence="1">Endonuclease that resolves Holliday junction intermediates in genetic recombination. Cleaves mobile four-strand junctions by introducing symmetrical nicks in paired strands. Promotes annealing of linear ssDNA with homologous dsDNA. Required for DNA repair, homologous recombination and chromosome segregation.</text>
</comment>
<comment type="catalytic activity">
    <reaction evidence="1">
        <text>Endonucleolytic cleavage at a junction such as a reciprocal single-stranded crossover between two homologous DNA duplexes (Holliday junction).</text>
        <dbReference type="EC" id="3.1.21.10"/>
    </reaction>
</comment>
<comment type="cofactor">
    <cofactor evidence="1">
        <name>Mg(2+)</name>
        <dbReference type="ChEBI" id="CHEBI:18420"/>
    </cofactor>
    <text evidence="1">Binds 1 Mg(2+) ion per subunit.</text>
</comment>
<comment type="subcellular location">
    <subcellularLocation>
        <location evidence="1">Cytoplasm</location>
    </subcellularLocation>
</comment>
<comment type="similarity">
    <text evidence="1">Belongs to the RecU family.</text>
</comment>
<protein>
    <recommendedName>
        <fullName evidence="1">Holliday junction resolvase RecU</fullName>
        <ecNumber evidence="1">3.1.21.10</ecNumber>
    </recommendedName>
    <alternativeName>
        <fullName evidence="1">Recombination protein U homolog</fullName>
    </alternativeName>
</protein>
<accession>Q5FJX7</accession>
<name>RECU_LACAC</name>
<evidence type="ECO:0000255" key="1">
    <source>
        <dbReference type="HAMAP-Rule" id="MF_00130"/>
    </source>
</evidence>
<sequence>MVKYPSGSLAAFRKPVTTQKKMRTGKRSYTHKKGVNFSDRGMTLEQQINESNKYYLTEEIAVVHKKPTPIQIVKVDYPKRSKAVIREAYFRQASTTDYNGVYKGYYLDFEAKETKNKTNFPLKNFHEHQIFHLAECLKQQGICFTIIRFASLERYFVTPASFVINAWRKAEKSSMTLKEIESHSYEIKSGFRPTLPYLKAVDNFIADRKRE</sequence>
<feature type="chain" id="PRO_1000016725" description="Holliday junction resolvase RecU">
    <location>
        <begin position="1"/>
        <end position="211"/>
    </location>
</feature>
<feature type="binding site" evidence="1">
    <location>
        <position position="95"/>
    </location>
    <ligand>
        <name>Mg(2+)</name>
        <dbReference type="ChEBI" id="CHEBI:18420"/>
    </ligand>
</feature>
<feature type="binding site" evidence="1">
    <location>
        <position position="97"/>
    </location>
    <ligand>
        <name>Mg(2+)</name>
        <dbReference type="ChEBI" id="CHEBI:18420"/>
    </ligand>
</feature>
<feature type="binding site" evidence="1">
    <location>
        <position position="110"/>
    </location>
    <ligand>
        <name>Mg(2+)</name>
        <dbReference type="ChEBI" id="CHEBI:18420"/>
    </ligand>
</feature>
<feature type="binding site" evidence="1">
    <location>
        <position position="129"/>
    </location>
    <ligand>
        <name>Mg(2+)</name>
        <dbReference type="ChEBI" id="CHEBI:18420"/>
    </ligand>
</feature>
<feature type="site" description="Transition state stabilizer" evidence="1">
    <location>
        <position position="112"/>
    </location>
</feature>